<feature type="chain" id="PRO_1000149829" description="tRNA pseudouridine synthase B">
    <location>
        <begin position="1"/>
        <end position="304"/>
    </location>
</feature>
<feature type="active site" description="Nucleophile" evidence="1">
    <location>
        <position position="44"/>
    </location>
</feature>
<sequence length="304" mass="32190">MVDGWIILDKPLELGSTQGVAAVKRNLRQAGYGKCKVGHGGTLDPLATGVLPIAVGEATKLCGRMLDASKVYAFTVAFGTETDSLDLEGGIVATSDVRPPLADVHVTLGAFRDSIDQVPPAYSALMVEGRRAYDLARAGETVELPSRRVTIHALTLDSWTGSEGAVETATLTAHVSKGTYIRSLARDIARALGTVGHVTMLRRLKAGPFAIEQAISLDKLNALGQGAPLEHVLLPLEAGLVDIPALDLDPEQARAVRQGRVLTGLPFEDGLYWARLGTVPVALVELSDGNLKVSRGFNLQDVAE</sequence>
<organism>
    <name type="scientific">Novosphingobium aromaticivorans (strain ATCC 700278 / DSM 12444 / CCUG 56034 / CIP 105152 / NBRC 16084 / F199)</name>
    <dbReference type="NCBI Taxonomy" id="279238"/>
    <lineage>
        <taxon>Bacteria</taxon>
        <taxon>Pseudomonadati</taxon>
        <taxon>Pseudomonadota</taxon>
        <taxon>Alphaproteobacteria</taxon>
        <taxon>Sphingomonadales</taxon>
        <taxon>Sphingomonadaceae</taxon>
        <taxon>Novosphingobium</taxon>
    </lineage>
</organism>
<keyword id="KW-0413">Isomerase</keyword>
<keyword id="KW-1185">Reference proteome</keyword>
<keyword id="KW-0819">tRNA processing</keyword>
<evidence type="ECO:0000255" key="1">
    <source>
        <dbReference type="HAMAP-Rule" id="MF_01080"/>
    </source>
</evidence>
<proteinExistence type="inferred from homology"/>
<reference key="1">
    <citation type="submission" date="2006-01" db="EMBL/GenBank/DDBJ databases">
        <title>Complete sequence of Novosphingobium aromaticivorans DSM 12444.</title>
        <authorList>
            <consortium name="US DOE Joint Genome Institute"/>
            <person name="Copeland A."/>
            <person name="Lucas S."/>
            <person name="Lapidus A."/>
            <person name="Barry K."/>
            <person name="Detter J.C."/>
            <person name="Glavina T."/>
            <person name="Hammon N."/>
            <person name="Israni S."/>
            <person name="Pitluck S."/>
            <person name="Chain P."/>
            <person name="Malfatti S."/>
            <person name="Shin M."/>
            <person name="Vergez L."/>
            <person name="Schmutz J."/>
            <person name="Larimer F."/>
            <person name="Land M."/>
            <person name="Kyrpides N."/>
            <person name="Ivanova N."/>
            <person name="Fredrickson J."/>
            <person name="Balkwill D."/>
            <person name="Romine M.F."/>
            <person name="Richardson P."/>
        </authorList>
    </citation>
    <scope>NUCLEOTIDE SEQUENCE [LARGE SCALE GENOMIC DNA]</scope>
    <source>
        <strain>ATCC 700278 / DSM 12444 / CCUG 56034 / CIP 105152 / NBRC 16084 / F199</strain>
    </source>
</reference>
<comment type="function">
    <text evidence="1">Responsible for synthesis of pseudouridine from uracil-55 in the psi GC loop of transfer RNAs.</text>
</comment>
<comment type="catalytic activity">
    <reaction evidence="1">
        <text>uridine(55) in tRNA = pseudouridine(55) in tRNA</text>
        <dbReference type="Rhea" id="RHEA:42532"/>
        <dbReference type="Rhea" id="RHEA-COMP:10101"/>
        <dbReference type="Rhea" id="RHEA-COMP:10102"/>
        <dbReference type="ChEBI" id="CHEBI:65314"/>
        <dbReference type="ChEBI" id="CHEBI:65315"/>
        <dbReference type="EC" id="5.4.99.25"/>
    </reaction>
</comment>
<comment type="similarity">
    <text evidence="1">Belongs to the pseudouridine synthase TruB family. Type 1 subfamily.</text>
</comment>
<dbReference type="EC" id="5.4.99.25" evidence="1"/>
<dbReference type="EMBL" id="CP000248">
    <property type="protein sequence ID" value="ABD26920.1"/>
    <property type="molecule type" value="Genomic_DNA"/>
</dbReference>
<dbReference type="RefSeq" id="WP_011446126.1">
    <property type="nucleotide sequence ID" value="NC_007794.1"/>
</dbReference>
<dbReference type="SMR" id="Q2G5F3"/>
<dbReference type="STRING" id="279238.Saro_2484"/>
<dbReference type="KEGG" id="nar:Saro_2484"/>
<dbReference type="eggNOG" id="COG0130">
    <property type="taxonomic scope" value="Bacteria"/>
</dbReference>
<dbReference type="HOGENOM" id="CLU_032087_0_3_5"/>
<dbReference type="Proteomes" id="UP000009134">
    <property type="component" value="Chromosome"/>
</dbReference>
<dbReference type="GO" id="GO:0003723">
    <property type="term" value="F:RNA binding"/>
    <property type="evidence" value="ECO:0007669"/>
    <property type="project" value="InterPro"/>
</dbReference>
<dbReference type="GO" id="GO:0160148">
    <property type="term" value="F:tRNA pseudouridine(55) synthase activity"/>
    <property type="evidence" value="ECO:0007669"/>
    <property type="project" value="UniProtKB-EC"/>
</dbReference>
<dbReference type="GO" id="GO:1990481">
    <property type="term" value="P:mRNA pseudouridine synthesis"/>
    <property type="evidence" value="ECO:0007669"/>
    <property type="project" value="TreeGrafter"/>
</dbReference>
<dbReference type="GO" id="GO:0031119">
    <property type="term" value="P:tRNA pseudouridine synthesis"/>
    <property type="evidence" value="ECO:0007669"/>
    <property type="project" value="UniProtKB-UniRule"/>
</dbReference>
<dbReference type="CDD" id="cd02573">
    <property type="entry name" value="PseudoU_synth_EcTruB"/>
    <property type="match status" value="1"/>
</dbReference>
<dbReference type="Gene3D" id="3.30.2350.10">
    <property type="entry name" value="Pseudouridine synthase"/>
    <property type="match status" value="1"/>
</dbReference>
<dbReference type="HAMAP" id="MF_01080">
    <property type="entry name" value="TruB_bact"/>
    <property type="match status" value="1"/>
</dbReference>
<dbReference type="InterPro" id="IPR020103">
    <property type="entry name" value="PsdUridine_synth_cat_dom_sf"/>
</dbReference>
<dbReference type="InterPro" id="IPR002501">
    <property type="entry name" value="PsdUridine_synth_N"/>
</dbReference>
<dbReference type="InterPro" id="IPR014780">
    <property type="entry name" value="tRNA_psdUridine_synth_TruB"/>
</dbReference>
<dbReference type="InterPro" id="IPR032819">
    <property type="entry name" value="TruB_C"/>
</dbReference>
<dbReference type="NCBIfam" id="TIGR00431">
    <property type="entry name" value="TruB"/>
    <property type="match status" value="1"/>
</dbReference>
<dbReference type="PANTHER" id="PTHR13767:SF2">
    <property type="entry name" value="PSEUDOURIDYLATE SYNTHASE TRUB1"/>
    <property type="match status" value="1"/>
</dbReference>
<dbReference type="PANTHER" id="PTHR13767">
    <property type="entry name" value="TRNA-PSEUDOURIDINE SYNTHASE"/>
    <property type="match status" value="1"/>
</dbReference>
<dbReference type="Pfam" id="PF16198">
    <property type="entry name" value="TruB_C_2"/>
    <property type="match status" value="1"/>
</dbReference>
<dbReference type="Pfam" id="PF01509">
    <property type="entry name" value="TruB_N"/>
    <property type="match status" value="1"/>
</dbReference>
<dbReference type="SUPFAM" id="SSF55120">
    <property type="entry name" value="Pseudouridine synthase"/>
    <property type="match status" value="1"/>
</dbReference>
<protein>
    <recommendedName>
        <fullName evidence="1">tRNA pseudouridine synthase B</fullName>
        <ecNumber evidence="1">5.4.99.25</ecNumber>
    </recommendedName>
    <alternativeName>
        <fullName evidence="1">tRNA pseudouridine(55) synthase</fullName>
        <shortName evidence="1">Psi55 synthase</shortName>
    </alternativeName>
    <alternativeName>
        <fullName evidence="1">tRNA pseudouridylate synthase</fullName>
    </alternativeName>
    <alternativeName>
        <fullName evidence="1">tRNA-uridine isomerase</fullName>
    </alternativeName>
</protein>
<gene>
    <name evidence="1" type="primary">truB</name>
    <name type="ordered locus">Saro_2484</name>
</gene>
<name>TRUB_NOVAD</name>
<accession>Q2G5F3</accession>